<organism>
    <name type="scientific">Rice gall dwarf virus</name>
    <name type="common">RGDV</name>
    <dbReference type="NCBI Taxonomy" id="10986"/>
    <lineage>
        <taxon>Viruses</taxon>
        <taxon>Riboviria</taxon>
        <taxon>Orthornavirae</taxon>
        <taxon>Duplornaviricota</taxon>
        <taxon>Resentoviricetes</taxon>
        <taxon>Reovirales</taxon>
        <taxon>Sedoreoviridae</taxon>
        <taxon>Phytoreovirus</taxon>
    </lineage>
</organism>
<proteinExistence type="inferred from homology"/>
<reference key="1">
    <citation type="journal article" date="1990" name="J. Gen. Virol.">
        <title>Nucleotide sequence of segment S9 of the genome of rice gall dwarf virus.</title>
        <authorList>
            <person name="Koganezawa H."/>
            <person name="Hibino H."/>
            <person name="Motoyoshi F."/>
            <person name="Kato H."/>
            <person name="Noda H."/>
            <person name="Ishikawa K."/>
            <person name="Omura T."/>
        </authorList>
    </citation>
    <scope>NUCLEOTIDE SEQUENCE [GENOMIC RNA]</scope>
</reference>
<organismHost>
    <name type="scientific">Nephotettix cincticeps</name>
    <name type="common">Green rice leafhopper</name>
    <name type="synonym">Selenocephalus cincticeps</name>
    <dbReference type="NCBI Taxonomy" id="94400"/>
</organismHost>
<organismHost>
    <name type="scientific">Oryza sativa</name>
    <name type="common">Rice</name>
    <dbReference type="NCBI Taxonomy" id="4530"/>
</organismHost>
<sequence>MFTSSAAKTGRRRASTAKKSEDELVVDRVPNLIDGSISSGPISTGPDSDQNNKKKLPNPFAPKINNLGKDGQTIEQGSMLENKSRENEGDGGSPECVTPNHTDIGTSLGQVTTKGNECHDKYIGRGSPPNERGGSRPSQERGDSFVAIKYPSMLTTLAVMLNYDIHNLYEFMMAVLNVTKELNDPNVLVERAVFDAMQYSRSRGIGDRESYSMFCYMIHGYASLMRLAEEPWSDGVSSNESEIHIKASDMKKSVGVTLTVKPNSLWVCNKNDFARLICIFTLPDDIIAFLRTDGEDCYGGSNIYVGLDISKPPYIPLRDVEEP</sequence>
<evidence type="ECO:0000250" key="1"/>
<evidence type="ECO:0000256" key="2">
    <source>
        <dbReference type="SAM" id="MobiDB-lite"/>
    </source>
</evidence>
<dbReference type="EMBL" id="D01047">
    <property type="protein sequence ID" value="BAA00853.1"/>
    <property type="molecule type" value="Genomic_RNA"/>
</dbReference>
<dbReference type="PIR" id="JQ0935">
    <property type="entry name" value="JQ0935"/>
</dbReference>
<dbReference type="RefSeq" id="YP_001111371.1">
    <property type="nucleotide sequence ID" value="NC_009246.1"/>
</dbReference>
<dbReference type="GeneID" id="5075722"/>
<dbReference type="KEGG" id="vg:5075722"/>
<dbReference type="Proteomes" id="UP000006720">
    <property type="component" value="Genome"/>
</dbReference>
<dbReference type="GO" id="GO:0030430">
    <property type="term" value="C:host cell cytoplasm"/>
    <property type="evidence" value="ECO:0007669"/>
    <property type="project" value="UniProtKB-SubCell"/>
</dbReference>
<accession>P23628</accession>
<comment type="function">
    <text evidence="1">Constituent of viral factories.</text>
</comment>
<comment type="subcellular location">
    <subcellularLocation>
        <location evidence="1">Host cytoplasm</location>
    </subcellularLocation>
    <text evidence="1">Constituent of spherical cytoplasmic structures, called virus factories, that appear early after infection and are the site of viral replication and packaging.</text>
</comment>
<keyword id="KW-1035">Host cytoplasm</keyword>
<keyword id="KW-1185">Reference proteome</keyword>
<name>NSP12_RGDV</name>
<feature type="chain" id="PRO_0000222772" description="Non-structural protein 9">
    <location>
        <begin position="1"/>
        <end position="323"/>
    </location>
</feature>
<feature type="region of interest" description="Disordered" evidence="2">
    <location>
        <begin position="1"/>
        <end position="142"/>
    </location>
</feature>
<feature type="compositionally biased region" description="Low complexity" evidence="2">
    <location>
        <begin position="33"/>
        <end position="49"/>
    </location>
</feature>
<feature type="compositionally biased region" description="Polar residues" evidence="2">
    <location>
        <begin position="99"/>
        <end position="115"/>
    </location>
</feature>
<protein>
    <recommendedName>
        <fullName>Non-structural protein 9</fullName>
        <shortName>Pns9</shortName>
    </recommendedName>
</protein>